<dbReference type="PIR" id="A26148">
    <property type="entry name" value="LNLD1C"/>
</dbReference>
<dbReference type="PIR" id="B26148">
    <property type="entry name" value="LNLD2C"/>
</dbReference>
<dbReference type="SMR" id="P07440"/>
<dbReference type="GO" id="GO:0030246">
    <property type="term" value="F:carbohydrate binding"/>
    <property type="evidence" value="ECO:0007669"/>
    <property type="project" value="UniProtKB-KW"/>
</dbReference>
<dbReference type="Gene3D" id="2.60.120.200">
    <property type="match status" value="1"/>
</dbReference>
<dbReference type="InterPro" id="IPR013320">
    <property type="entry name" value="ConA-like_dom_sf"/>
</dbReference>
<dbReference type="InterPro" id="IPR000985">
    <property type="entry name" value="Lectin_LegA_CS"/>
</dbReference>
<dbReference type="InterPro" id="IPR001220">
    <property type="entry name" value="Legume_lectin_dom"/>
</dbReference>
<dbReference type="Pfam" id="PF00139">
    <property type="entry name" value="Lectin_legB"/>
    <property type="match status" value="1"/>
</dbReference>
<dbReference type="SUPFAM" id="SSF49899">
    <property type="entry name" value="Concanavalin A-like lectins/glucanases"/>
    <property type="match status" value="1"/>
</dbReference>
<dbReference type="PROSITE" id="PS00308">
    <property type="entry name" value="LECTIN_LEGUME_ALPHA"/>
    <property type="match status" value="1"/>
</dbReference>
<comment type="subunit">
    <text>Tetramer of two alpha and two beta chains.</text>
</comment>
<comment type="similarity">
    <text evidence="1">Belongs to the leguminous lectin family.</text>
</comment>
<reference key="1">
    <citation type="journal article" date="1986" name="Phytochemistry">
        <title>The amino acid sequences of the alpha subunits of the lectins from Lathyrus cicera, L. alphaca and L. articulatus.</title>
        <authorList>
            <person name="Sousa-Cavada B."/>
            <person name="Richardson M."/>
            <person name="Yarwood A."/>
            <person name="Pere D."/>
            <person name="Rouge P."/>
        </authorList>
    </citation>
    <scope>PROTEIN SEQUENCE</scope>
</reference>
<evidence type="ECO:0000305" key="1"/>
<protein>
    <recommendedName>
        <fullName>Lectin alpha-1 chain</fullName>
    </recommendedName>
    <component>
        <recommendedName>
            <fullName>Lectin alpha-2 chain</fullName>
        </recommendedName>
    </component>
</protein>
<sequence length="54" mass="5910">VTSYTLNEVVPLKDVVPEWVRIGFSATTGAEFAAHEVLSWSFHSELGETSASKQ</sequence>
<name>LECA_LATCI</name>
<keyword id="KW-0903">Direct protein sequencing</keyword>
<keyword id="KW-0430">Lectin</keyword>
<feature type="chain" id="PRO_0000045878" description="Lectin alpha-1 chain">
    <location>
        <begin position="1"/>
        <end position="54"/>
    </location>
</feature>
<feature type="chain" id="PRO_0000045879" description="Lectin alpha-2 chain">
    <location>
        <begin position="1"/>
        <end position="53"/>
    </location>
</feature>
<proteinExistence type="evidence at protein level"/>
<organism>
    <name type="scientific">Lathyrus cicera</name>
    <name type="common">Flat-pod pea</name>
    <dbReference type="NCBI Taxonomy" id="3856"/>
    <lineage>
        <taxon>Eukaryota</taxon>
        <taxon>Viridiplantae</taxon>
        <taxon>Streptophyta</taxon>
        <taxon>Embryophyta</taxon>
        <taxon>Tracheophyta</taxon>
        <taxon>Spermatophyta</taxon>
        <taxon>Magnoliopsida</taxon>
        <taxon>eudicotyledons</taxon>
        <taxon>Gunneridae</taxon>
        <taxon>Pentapetalae</taxon>
        <taxon>rosids</taxon>
        <taxon>fabids</taxon>
        <taxon>Fabales</taxon>
        <taxon>Fabaceae</taxon>
        <taxon>Papilionoideae</taxon>
        <taxon>50 kb inversion clade</taxon>
        <taxon>NPAAA clade</taxon>
        <taxon>Hologalegina</taxon>
        <taxon>IRL clade</taxon>
        <taxon>Fabeae</taxon>
        <taxon>Lathyrus</taxon>
    </lineage>
</organism>
<accession>P07440</accession>